<dbReference type="EMBL" id="FO080145">
    <property type="protein sequence ID" value="CCD61586.1"/>
    <property type="molecule type" value="Genomic_DNA"/>
</dbReference>
<dbReference type="PIR" id="T32538">
    <property type="entry name" value="T32538"/>
</dbReference>
<dbReference type="RefSeq" id="NP_500820.1">
    <property type="nucleotide sequence ID" value="NM_068419.7"/>
</dbReference>
<dbReference type="PDB" id="3V71">
    <property type="method" value="X-ray"/>
    <property type="resolution" value="2.90 A"/>
    <property type="chains" value="A=76-453"/>
</dbReference>
<dbReference type="PDBsum" id="3V71"/>
<dbReference type="SMR" id="O44169"/>
<dbReference type="FunCoup" id="O44169">
    <property type="interactions" value="49"/>
</dbReference>
<dbReference type="STRING" id="6239.B0273.2.2"/>
<dbReference type="PaxDb" id="6239-B0273.2.2"/>
<dbReference type="EnsemblMetazoa" id="B0273.2.1">
    <property type="protein sequence ID" value="B0273.2.1"/>
    <property type="gene ID" value="WBGene00004243"/>
</dbReference>
<dbReference type="GeneID" id="177332"/>
<dbReference type="KEGG" id="cel:CELE_B0273.2"/>
<dbReference type="UCSC" id="B0273.2.1">
    <property type="organism name" value="c. elegans"/>
</dbReference>
<dbReference type="AGR" id="WB:WBGene00004243"/>
<dbReference type="CTD" id="177332"/>
<dbReference type="WormBase" id="B0273.2">
    <property type="protein sequence ID" value="CE16788"/>
    <property type="gene ID" value="WBGene00004243"/>
    <property type="gene designation" value="puf-7"/>
</dbReference>
<dbReference type="eggNOG" id="KOG1488">
    <property type="taxonomic scope" value="Eukaryota"/>
</dbReference>
<dbReference type="GeneTree" id="ENSGT00970000196107"/>
<dbReference type="HOGENOM" id="CLU_028494_0_0_1"/>
<dbReference type="InParanoid" id="O44169"/>
<dbReference type="OrthoDB" id="668540at2759"/>
<dbReference type="PhylomeDB" id="O44169"/>
<dbReference type="EvolutionaryTrace" id="O44169"/>
<dbReference type="PRO" id="PR:O44169"/>
<dbReference type="Proteomes" id="UP000001940">
    <property type="component" value="Chromosome IV"/>
</dbReference>
<dbReference type="Bgee" id="WBGene00004243">
    <property type="expression patterns" value="Expressed in adult organism and 3 other cell types or tissues"/>
</dbReference>
<dbReference type="GO" id="GO:0005737">
    <property type="term" value="C:cytoplasm"/>
    <property type="evidence" value="ECO:0000318"/>
    <property type="project" value="GO_Central"/>
</dbReference>
<dbReference type="GO" id="GO:0005634">
    <property type="term" value="C:nucleus"/>
    <property type="evidence" value="ECO:0000318"/>
    <property type="project" value="GO_Central"/>
</dbReference>
<dbReference type="GO" id="GO:0003730">
    <property type="term" value="F:mRNA 3'-UTR binding"/>
    <property type="evidence" value="ECO:0000318"/>
    <property type="project" value="GO_Central"/>
</dbReference>
<dbReference type="GO" id="GO:0003723">
    <property type="term" value="F:RNA binding"/>
    <property type="evidence" value="ECO:0000250"/>
    <property type="project" value="WormBase"/>
</dbReference>
<dbReference type="GO" id="GO:0051301">
    <property type="term" value="P:cell division"/>
    <property type="evidence" value="ECO:0007669"/>
    <property type="project" value="UniProtKB-KW"/>
</dbReference>
<dbReference type="GO" id="GO:0007281">
    <property type="term" value="P:germ cell development"/>
    <property type="evidence" value="ECO:0000316"/>
    <property type="project" value="WormBase"/>
</dbReference>
<dbReference type="GO" id="GO:0048477">
    <property type="term" value="P:oogenesis"/>
    <property type="evidence" value="ECO:0007669"/>
    <property type="project" value="UniProtKB-KW"/>
</dbReference>
<dbReference type="GO" id="GO:0010608">
    <property type="term" value="P:post-transcriptional regulation of gene expression"/>
    <property type="evidence" value="ECO:0000318"/>
    <property type="project" value="GO_Central"/>
</dbReference>
<dbReference type="GO" id="GO:0006417">
    <property type="term" value="P:regulation of translation"/>
    <property type="evidence" value="ECO:0007669"/>
    <property type="project" value="UniProtKB-KW"/>
</dbReference>
<dbReference type="FunFam" id="1.25.10.10:FF:000558">
    <property type="entry name" value="Fem-3 mRNA-binding factor 2"/>
    <property type="match status" value="1"/>
</dbReference>
<dbReference type="Gene3D" id="1.25.10.10">
    <property type="entry name" value="Leucine-rich Repeat Variant"/>
    <property type="match status" value="1"/>
</dbReference>
<dbReference type="InterPro" id="IPR011989">
    <property type="entry name" value="ARM-like"/>
</dbReference>
<dbReference type="InterPro" id="IPR016024">
    <property type="entry name" value="ARM-type_fold"/>
</dbReference>
<dbReference type="InterPro" id="IPR033133">
    <property type="entry name" value="PUM-HD"/>
</dbReference>
<dbReference type="InterPro" id="IPR001313">
    <property type="entry name" value="Pumilio_RNA-bd_rpt"/>
</dbReference>
<dbReference type="PANTHER" id="PTHR12537:SF26">
    <property type="entry name" value="PUMILIO DOMAIN-CONTAINING PROTEIN 5-RELATED"/>
    <property type="match status" value="1"/>
</dbReference>
<dbReference type="PANTHER" id="PTHR12537">
    <property type="entry name" value="RNA BINDING PROTEIN PUMILIO-RELATED"/>
    <property type="match status" value="1"/>
</dbReference>
<dbReference type="Pfam" id="PF00806">
    <property type="entry name" value="PUF"/>
    <property type="match status" value="7"/>
</dbReference>
<dbReference type="SMART" id="SM00025">
    <property type="entry name" value="Pumilio"/>
    <property type="match status" value="7"/>
</dbReference>
<dbReference type="SUPFAM" id="SSF48371">
    <property type="entry name" value="ARM repeat"/>
    <property type="match status" value="1"/>
</dbReference>
<dbReference type="PROSITE" id="PS50302">
    <property type="entry name" value="PUM"/>
    <property type="match status" value="8"/>
</dbReference>
<dbReference type="PROSITE" id="PS50303">
    <property type="entry name" value="PUM_HD"/>
    <property type="match status" value="1"/>
</dbReference>
<sequence>MTPNRRSTDSYNMLGASFDFDPDFSLLSNKTHKNKNPKPPVKLLPYRHGSNTTSSDSDSYIFNSGSGSSDAETPAPVAPIFISLEDVLLNGQLIDFAIDPSGVKFLEANYPLDSEDQIRKAVFEKFTESTTLFVGLCHSRNGNFIVQKLVELATPAEQRELLRQMIDGGLLAMCKDKFACRVVQLALQKFDHSNVFQLIQELSTFDLAAMCTDQISIHVIQRVVKQLPVDMWTFFVHFLSSGDSLMAVCQDKYGCRLVQQVIDRLAENPKLPCFKFRIQLLHSLMTCIVRNCYRLSSNEFANYVIQYVIKSSGIMEMYRDTIIDKCLLRNLLSMSQDKYASHVIEGAFLFAPPALLHEMMEEIFSGYVKDVESNRDALDILLFHQYGNYVVQQMISICTAALIGKEERELPPAILLLYSGWYEKMKQRVLQHASRLERFSSGKKIIDSVMRHGVPTAAAVNAQAAPSLMELTAQFDAMFPSFLAR</sequence>
<reference evidence="9" key="1">
    <citation type="journal article" date="1998" name="Science">
        <title>Genome sequence of the nematode C. elegans: a platform for investigating biology.</title>
        <authorList>
            <consortium name="The C. elegans sequencing consortium"/>
        </authorList>
    </citation>
    <scope>NUCLEOTIDE SEQUENCE [LARGE SCALE GENOMIC DNA]</scope>
    <source>
        <strain evidence="9">Bristol N2</strain>
    </source>
</reference>
<reference evidence="8" key="2">
    <citation type="journal article" date="1999" name="Development">
        <title>nos-1 and nos-2, two genes related to Drosophila nanos, regulate primordial germ cell development and survival in Caenorhabditis elegans.</title>
        <authorList>
            <person name="Subramaniam K."/>
            <person name="Seydoux G."/>
        </authorList>
    </citation>
    <scope>DISRUPTION PHENOTYPE</scope>
</reference>
<reference evidence="8" key="3">
    <citation type="journal article" date="2007" name="Dev. Biol.">
        <title>The RNA-binding proteins PUF-5, PUF-6, and PUF-7 reveal multiple systems for maternal mRNA regulation during C. elegans oogenesis.</title>
        <authorList>
            <person name="Lublin A.L."/>
            <person name="Evans T.C."/>
        </authorList>
    </citation>
    <scope>FUNCTION</scope>
    <scope>DISRUPTION PHENOTYPE</scope>
</reference>
<reference evidence="8" key="4">
    <citation type="journal article" date="2012" name="Dev. Biol.">
        <title>A network of PUF proteins and Ras signaling promote mRNA repression and oogenesis in C. elegans.</title>
        <authorList>
            <person name="Hubstenberger A."/>
            <person name="Cameron C."/>
            <person name="Shtofman R."/>
            <person name="Gutman S."/>
            <person name="Evans T.C."/>
        </authorList>
    </citation>
    <scope>FUNCTION</scope>
    <scope>DISRUPTION PHENOTYPE</scope>
</reference>
<reference evidence="8 10" key="5">
    <citation type="journal article" date="2012" name="J. Biol. Chem.">
        <title>Divergence of Pumilio/fem-3 mRNA binding factor (PUF) protein specificity through variations in an RNA-binding pocket.</title>
        <authorList>
            <person name="Qiu C."/>
            <person name="Kershner A."/>
            <person name="Wang Y."/>
            <person name="Holley C.P."/>
            <person name="Wilinski D."/>
            <person name="Keles S."/>
            <person name="Kimble J."/>
            <person name="Wickens M."/>
            <person name="Hall T.M."/>
        </authorList>
    </citation>
    <scope>X-RAY CRYSTALLOGRAPHY (2.90 ANGSTROMS) OF 76-453 IN COMPLEX WITH RNA</scope>
    <scope>FUNCTION</scope>
    <scope>MUTAGENESIS OF SER-441</scope>
</reference>
<feature type="chain" id="PRO_0000424282" description="Pumilio domain-containing protein 7">
    <location>
        <begin position="1"/>
        <end position="485"/>
    </location>
</feature>
<feature type="repeat" description="Pumilio 1" evidence="1">
    <location>
        <begin position="86"/>
        <end position="124"/>
    </location>
</feature>
<feature type="repeat" description="Pumilio 2" evidence="1">
    <location>
        <begin position="128"/>
        <end position="163"/>
    </location>
</feature>
<feature type="repeat" description="Pumilio 3" evidence="1">
    <location>
        <begin position="164"/>
        <end position="200"/>
    </location>
</feature>
<feature type="repeat" description="Pumilio 4" evidence="1">
    <location>
        <begin position="201"/>
        <end position="236"/>
    </location>
</feature>
<feature type="repeat" description="Pumilio 5" evidence="1">
    <location>
        <begin position="237"/>
        <end position="279"/>
    </location>
</feature>
<feature type="repeat" description="Pumilio 6" evidence="1">
    <location>
        <begin position="287"/>
        <end position="324"/>
    </location>
</feature>
<feature type="repeat" description="Pumilio 7" evidence="1">
    <location>
        <begin position="326"/>
        <end position="361"/>
    </location>
</feature>
<feature type="repeat" description="Pumilio 8" evidence="1">
    <location>
        <begin position="370"/>
        <end position="411"/>
    </location>
</feature>
<feature type="region of interest" description="Disordered" evidence="2">
    <location>
        <begin position="29"/>
        <end position="72"/>
    </location>
</feature>
<feature type="region of interest" description="RNA-binding" evidence="5">
    <location>
        <begin position="439"/>
        <end position="454"/>
    </location>
</feature>
<feature type="compositionally biased region" description="Polar residues" evidence="2">
    <location>
        <begin position="49"/>
        <end position="71"/>
    </location>
</feature>
<feature type="mutagenesis site" description="Reduced RNA-binding activity." evidence="5">
    <original>S</original>
    <variation>A</variation>
    <location>
        <position position="441"/>
    </location>
</feature>
<feature type="helix" evidence="12">
    <location>
        <begin position="84"/>
        <end position="89"/>
    </location>
</feature>
<feature type="helix" evidence="12">
    <location>
        <begin position="93"/>
        <end position="98"/>
    </location>
</feature>
<feature type="helix" evidence="12">
    <location>
        <begin position="100"/>
        <end position="108"/>
    </location>
</feature>
<feature type="helix" evidence="12">
    <location>
        <begin position="117"/>
        <end position="127"/>
    </location>
</feature>
<feature type="helix" evidence="12">
    <location>
        <begin position="130"/>
        <end position="137"/>
    </location>
</feature>
<feature type="helix" evidence="12">
    <location>
        <begin position="142"/>
        <end position="151"/>
    </location>
</feature>
<feature type="helix" evidence="12">
    <location>
        <begin position="155"/>
        <end position="167"/>
    </location>
</feature>
<feature type="helix" evidence="12">
    <location>
        <begin position="170"/>
        <end position="174"/>
    </location>
</feature>
<feature type="helix" evidence="12">
    <location>
        <begin position="179"/>
        <end position="189"/>
    </location>
</feature>
<feature type="helix" evidence="12">
    <location>
        <begin position="192"/>
        <end position="203"/>
    </location>
</feature>
<feature type="helix" evidence="12">
    <location>
        <begin position="207"/>
        <end position="212"/>
    </location>
</feature>
<feature type="turn" evidence="12">
    <location>
        <begin position="214"/>
        <end position="216"/>
    </location>
</feature>
<feature type="helix" evidence="12">
    <location>
        <begin position="217"/>
        <end position="224"/>
    </location>
</feature>
<feature type="turn" evidence="12">
    <location>
        <begin position="229"/>
        <end position="231"/>
    </location>
</feature>
<feature type="helix" evidence="12">
    <location>
        <begin position="233"/>
        <end position="240"/>
    </location>
</feature>
<feature type="helix" evidence="12">
    <location>
        <begin position="244"/>
        <end position="250"/>
    </location>
</feature>
<feature type="helix" evidence="12">
    <location>
        <begin position="254"/>
        <end position="265"/>
    </location>
</feature>
<feature type="strand" evidence="12">
    <location>
        <begin position="269"/>
        <end position="271"/>
    </location>
</feature>
<feature type="helix" evidence="12">
    <location>
        <begin position="274"/>
        <end position="289"/>
    </location>
</feature>
<feature type="helix" evidence="12">
    <location>
        <begin position="292"/>
        <end position="296"/>
    </location>
</feature>
<feature type="turn" evidence="12">
    <location>
        <begin position="299"/>
        <end position="301"/>
    </location>
</feature>
<feature type="helix" evidence="12">
    <location>
        <begin position="302"/>
        <end position="309"/>
    </location>
</feature>
<feature type="helix" evidence="12">
    <location>
        <begin position="315"/>
        <end position="325"/>
    </location>
</feature>
<feature type="turn" evidence="12">
    <location>
        <begin position="326"/>
        <end position="329"/>
    </location>
</feature>
<feature type="helix" evidence="12">
    <location>
        <begin position="331"/>
        <end position="334"/>
    </location>
</feature>
<feature type="helix" evidence="12">
    <location>
        <begin position="340"/>
        <end position="350"/>
    </location>
</feature>
<feature type="helix" evidence="12">
    <location>
        <begin position="353"/>
        <end position="363"/>
    </location>
</feature>
<feature type="strand" evidence="12">
    <location>
        <begin position="371"/>
        <end position="373"/>
    </location>
</feature>
<feature type="helix" evidence="12">
    <location>
        <begin position="377"/>
        <end position="382"/>
    </location>
</feature>
<feature type="helix" evidence="12">
    <location>
        <begin position="387"/>
        <end position="401"/>
    </location>
</feature>
<feature type="turn" evidence="12">
    <location>
        <begin position="412"/>
        <end position="414"/>
    </location>
</feature>
<feature type="helix" evidence="12">
    <location>
        <begin position="415"/>
        <end position="436"/>
    </location>
</feature>
<feature type="helix" evidence="12">
    <location>
        <begin position="440"/>
        <end position="451"/>
    </location>
</feature>
<evidence type="ECO:0000255" key="1"/>
<evidence type="ECO:0000256" key="2">
    <source>
        <dbReference type="SAM" id="MobiDB-lite"/>
    </source>
</evidence>
<evidence type="ECO:0000269" key="3">
    <source>
    </source>
</evidence>
<evidence type="ECO:0000269" key="4">
    <source>
    </source>
</evidence>
<evidence type="ECO:0000269" key="5">
    <source>
    </source>
</evidence>
<evidence type="ECO:0000269" key="6">
    <source>
    </source>
</evidence>
<evidence type="ECO:0000303" key="7">
    <source>
    </source>
</evidence>
<evidence type="ECO:0000305" key="8"/>
<evidence type="ECO:0000312" key="9">
    <source>
        <dbReference type="EMBL" id="CCD61586.1"/>
    </source>
</evidence>
<evidence type="ECO:0000312" key="10">
    <source>
        <dbReference type="PDB" id="3V71"/>
    </source>
</evidence>
<evidence type="ECO:0000312" key="11">
    <source>
        <dbReference type="WormBase" id="B0273.2"/>
    </source>
</evidence>
<evidence type="ECO:0007829" key="12">
    <source>
        <dbReference type="PDB" id="3V71"/>
    </source>
</evidence>
<organism>
    <name type="scientific">Caenorhabditis elegans</name>
    <dbReference type="NCBI Taxonomy" id="6239"/>
    <lineage>
        <taxon>Eukaryota</taxon>
        <taxon>Metazoa</taxon>
        <taxon>Ecdysozoa</taxon>
        <taxon>Nematoda</taxon>
        <taxon>Chromadorea</taxon>
        <taxon>Rhabditida</taxon>
        <taxon>Rhabditina</taxon>
        <taxon>Rhabditomorpha</taxon>
        <taxon>Rhabditoidea</taxon>
        <taxon>Rhabditidae</taxon>
        <taxon>Peloderinae</taxon>
        <taxon>Caenorhabditis</taxon>
    </lineage>
</organism>
<accession>O44169</accession>
<proteinExistence type="evidence at protein level"/>
<name>PUF7_CAEEL</name>
<gene>
    <name evidence="9 11" type="primary">puf-7</name>
    <name type="ORF">B0273.2</name>
</gene>
<keyword id="KW-0002">3D-structure</keyword>
<keyword id="KW-0131">Cell cycle</keyword>
<keyword id="KW-0132">Cell division</keyword>
<keyword id="KW-0217">Developmental protein</keyword>
<keyword id="KW-0221">Differentiation</keyword>
<keyword id="KW-0896">Oogenesis</keyword>
<keyword id="KW-1185">Reference proteome</keyword>
<keyword id="KW-0677">Repeat</keyword>
<keyword id="KW-0694">RNA-binding</keyword>
<keyword id="KW-0810">Translation regulation</keyword>
<comment type="function">
    <text evidence="4 5 6">RNA-binding protein that binds to the consensus sequence 5'-CUCUGUAUCUUGU-3' in mRNA 3'-UTRs and modulates mRNA expression and stability. Functions redundantly with puf-5 and puf-6 in oocyte formation and organization, early embryonic cell divisions, and repression of expression of glp-1 and other maternal mRNAs in late oogenesis.</text>
</comment>
<comment type="disruption phenotype">
    <text evidence="3 4 6">Simultaneous knockdown of puf-6 and puf-7 results in ectopic primordial germ cells (PGCs) outside the somatic gonads, premature PGC proliferation in L1 larvae and germ cell death. Does not affect germline development in adult hermaphrodites. Disruption with puf-5 and puf-6 results in abnormally small oocytes, disorganization of oocyte nuclei and cells, inefficient yolk uptake by oocytes, embryonic arrest with impaired eggshell formation and cytokinesis defects, impaired repression of glp-1 in late oogenesis, and mislocalization of rme-2 to the cytoplasm instead of the plasma membrane.</text>
</comment>
<comment type="miscellaneous">
    <text evidence="8">Puf-6 and puf-7 are &gt;98% identical on both nucleotide and protein sequence level. Experimental approaches often do not distinguish between the two genes, which are collectively referred to as puf6/7 and are considered to be functionally redundant.</text>
</comment>
<protein>
    <recommendedName>
        <fullName evidence="7">Pumilio domain-containing protein 7</fullName>
    </recommendedName>
</protein>